<organism>
    <name type="scientific">Agrobacterium fabrum (strain C58 / ATCC 33970)</name>
    <name type="common">Agrobacterium tumefaciens (strain C58)</name>
    <dbReference type="NCBI Taxonomy" id="176299"/>
    <lineage>
        <taxon>Bacteria</taxon>
        <taxon>Pseudomonadati</taxon>
        <taxon>Pseudomonadota</taxon>
        <taxon>Alphaproteobacteria</taxon>
        <taxon>Hyphomicrobiales</taxon>
        <taxon>Rhizobiaceae</taxon>
        <taxon>Rhizobium/Agrobacterium group</taxon>
        <taxon>Agrobacterium</taxon>
        <taxon>Agrobacterium tumefaciens complex</taxon>
    </lineage>
</organism>
<name>KDUI_AGRFC</name>
<feature type="chain" id="PRO_0000215479" description="4-deoxy-L-threo-5-hexosulose-uronate ketol-isomerase">
    <location>
        <begin position="1"/>
        <end position="274"/>
    </location>
</feature>
<feature type="binding site" evidence="1">
    <location>
        <position position="192"/>
    </location>
    <ligand>
        <name>Zn(2+)</name>
        <dbReference type="ChEBI" id="CHEBI:29105"/>
    </ligand>
</feature>
<feature type="binding site" evidence="1">
    <location>
        <position position="194"/>
    </location>
    <ligand>
        <name>Zn(2+)</name>
        <dbReference type="ChEBI" id="CHEBI:29105"/>
    </ligand>
</feature>
<feature type="binding site" evidence="1">
    <location>
        <position position="199"/>
    </location>
    <ligand>
        <name>Zn(2+)</name>
        <dbReference type="ChEBI" id="CHEBI:29105"/>
    </ligand>
</feature>
<feature type="binding site" evidence="1">
    <location>
        <position position="241"/>
    </location>
    <ligand>
        <name>Zn(2+)</name>
        <dbReference type="ChEBI" id="CHEBI:29105"/>
    </ligand>
</feature>
<protein>
    <recommendedName>
        <fullName evidence="1">4-deoxy-L-threo-5-hexosulose-uronate ketol-isomerase</fullName>
        <ecNumber evidence="1">5.3.1.17</ecNumber>
    </recommendedName>
    <alternativeName>
        <fullName evidence="1">5-keto-4-deoxyuronate isomerase</fullName>
    </alternativeName>
    <alternativeName>
        <fullName evidence="1">DKI isomerase</fullName>
    </alternativeName>
</protein>
<dbReference type="EC" id="5.3.1.17" evidence="1"/>
<dbReference type="EMBL" id="AE007870">
    <property type="protein sequence ID" value="AAK90244.2"/>
    <property type="molecule type" value="Genomic_DNA"/>
</dbReference>
<dbReference type="PIR" id="AH2942">
    <property type="entry name" value="AH2942"/>
</dbReference>
<dbReference type="PIR" id="B98340">
    <property type="entry name" value="B98340"/>
</dbReference>
<dbReference type="RefSeq" id="NP_357459.2">
    <property type="nucleotide sequence ID" value="NC_003063.2"/>
</dbReference>
<dbReference type="RefSeq" id="WP_010972792.1">
    <property type="nucleotide sequence ID" value="NC_003063.2"/>
</dbReference>
<dbReference type="SMR" id="Q8UB75"/>
<dbReference type="STRING" id="176299.Atu3142"/>
<dbReference type="EnsemblBacteria" id="AAK90244">
    <property type="protein sequence ID" value="AAK90244"/>
    <property type="gene ID" value="Atu3142"/>
</dbReference>
<dbReference type="GeneID" id="1134944"/>
<dbReference type="KEGG" id="atu:Atu3142"/>
<dbReference type="PATRIC" id="fig|176299.10.peg.2987"/>
<dbReference type="eggNOG" id="COG3717">
    <property type="taxonomic scope" value="Bacteria"/>
</dbReference>
<dbReference type="HOGENOM" id="CLU_062609_0_0_5"/>
<dbReference type="OrthoDB" id="9770644at2"/>
<dbReference type="PhylomeDB" id="Q8UB75"/>
<dbReference type="BioCyc" id="AGRO:ATU3142-MONOMER"/>
<dbReference type="UniPathway" id="UPA00545">
    <property type="reaction ID" value="UER00826"/>
</dbReference>
<dbReference type="Proteomes" id="UP000000813">
    <property type="component" value="Chromosome linear"/>
</dbReference>
<dbReference type="GO" id="GO:0008697">
    <property type="term" value="F:4-deoxy-L-threo-5-hexosulose-uronate ketol-isomerase activity"/>
    <property type="evidence" value="ECO:0007669"/>
    <property type="project" value="UniProtKB-UniRule"/>
</dbReference>
<dbReference type="GO" id="GO:0008270">
    <property type="term" value="F:zinc ion binding"/>
    <property type="evidence" value="ECO:0007669"/>
    <property type="project" value="UniProtKB-UniRule"/>
</dbReference>
<dbReference type="GO" id="GO:0019698">
    <property type="term" value="P:D-galacturonate catabolic process"/>
    <property type="evidence" value="ECO:0007669"/>
    <property type="project" value="TreeGrafter"/>
</dbReference>
<dbReference type="GO" id="GO:0042840">
    <property type="term" value="P:D-glucuronate catabolic process"/>
    <property type="evidence" value="ECO:0007669"/>
    <property type="project" value="TreeGrafter"/>
</dbReference>
<dbReference type="GO" id="GO:0045490">
    <property type="term" value="P:pectin catabolic process"/>
    <property type="evidence" value="ECO:0007669"/>
    <property type="project" value="UniProtKB-UniRule"/>
</dbReference>
<dbReference type="CDD" id="cd20491">
    <property type="entry name" value="cupin_KduI_C"/>
    <property type="match status" value="1"/>
</dbReference>
<dbReference type="CDD" id="cd20294">
    <property type="entry name" value="cupin_KduI_N"/>
    <property type="match status" value="1"/>
</dbReference>
<dbReference type="Gene3D" id="2.60.120.10">
    <property type="entry name" value="Jelly Rolls"/>
    <property type="match status" value="1"/>
</dbReference>
<dbReference type="Gene3D" id="2.60.120.520">
    <property type="entry name" value="pectin degrading enzyme 5-keto 4- deoxyuronate isomerase, domain 1"/>
    <property type="match status" value="1"/>
</dbReference>
<dbReference type="HAMAP" id="MF_00687">
    <property type="entry name" value="KduI"/>
    <property type="match status" value="1"/>
</dbReference>
<dbReference type="InterPro" id="IPR007045">
    <property type="entry name" value="KduI"/>
</dbReference>
<dbReference type="InterPro" id="IPR021120">
    <property type="entry name" value="KduI/IolB_isomerase"/>
</dbReference>
<dbReference type="InterPro" id="IPR027449">
    <property type="entry name" value="KduI_N"/>
</dbReference>
<dbReference type="InterPro" id="IPR014710">
    <property type="entry name" value="RmlC-like_jellyroll"/>
</dbReference>
<dbReference type="InterPro" id="IPR011051">
    <property type="entry name" value="RmlC_Cupin_sf"/>
</dbReference>
<dbReference type="NCBIfam" id="NF002091">
    <property type="entry name" value="PRK00924.1"/>
    <property type="match status" value="1"/>
</dbReference>
<dbReference type="PANTHER" id="PTHR38461">
    <property type="entry name" value="4-DEOXY-L-THREO-5-HEXOSULOSE-URONATE KETOL-ISOMERASE"/>
    <property type="match status" value="1"/>
</dbReference>
<dbReference type="PANTHER" id="PTHR38461:SF1">
    <property type="entry name" value="4-DEOXY-L-THREO-5-HEXOSULOSE-URONATE KETOL-ISOMERASE"/>
    <property type="match status" value="1"/>
</dbReference>
<dbReference type="Pfam" id="PF04962">
    <property type="entry name" value="KduI"/>
    <property type="match status" value="1"/>
</dbReference>
<dbReference type="PIRSF" id="PIRSF006625">
    <property type="entry name" value="KduI"/>
    <property type="match status" value="1"/>
</dbReference>
<dbReference type="SUPFAM" id="SSF51182">
    <property type="entry name" value="RmlC-like cupins"/>
    <property type="match status" value="1"/>
</dbReference>
<keyword id="KW-0413">Isomerase</keyword>
<keyword id="KW-0479">Metal-binding</keyword>
<keyword id="KW-1185">Reference proteome</keyword>
<keyword id="KW-0862">Zinc</keyword>
<proteinExistence type="inferred from homology"/>
<sequence length="274" mass="30522">MLTVETRQAVNPDYAKTLDTEGLRRHFLANDMFRSGEIRLIYTHYDRFVMGGAVPNGAPLTLDKVEETKTPSFLDRREMGIVNIGETGTVSAGDETYTLNRGDVLYLGAGSRAVTFDGAGRFYITSCPAHRSLPAKLVSLADSKEVKLGATETSNKRTINQFIHPLVMESCQLVLGYTMLEDGSVWNTIPSHIHDRRMEAYLYFGMDEKSRVLHLMGEPQETRHLFISNEEGAISPPWSIHSGAGIGSYTFIWAMAGDNVDYTDMDFIQPGDLK</sequence>
<accession>Q8UB75</accession>
<evidence type="ECO:0000255" key="1">
    <source>
        <dbReference type="HAMAP-Rule" id="MF_00687"/>
    </source>
</evidence>
<reference key="1">
    <citation type="journal article" date="2001" name="Science">
        <title>The genome of the natural genetic engineer Agrobacterium tumefaciens C58.</title>
        <authorList>
            <person name="Wood D.W."/>
            <person name="Setubal J.C."/>
            <person name="Kaul R."/>
            <person name="Monks D.E."/>
            <person name="Kitajima J.P."/>
            <person name="Okura V.K."/>
            <person name="Zhou Y."/>
            <person name="Chen L."/>
            <person name="Wood G.E."/>
            <person name="Almeida N.F. Jr."/>
            <person name="Woo L."/>
            <person name="Chen Y."/>
            <person name="Paulsen I.T."/>
            <person name="Eisen J.A."/>
            <person name="Karp P.D."/>
            <person name="Bovee D. Sr."/>
            <person name="Chapman P."/>
            <person name="Clendenning J."/>
            <person name="Deatherage G."/>
            <person name="Gillet W."/>
            <person name="Grant C."/>
            <person name="Kutyavin T."/>
            <person name="Levy R."/>
            <person name="Li M.-J."/>
            <person name="McClelland E."/>
            <person name="Palmieri A."/>
            <person name="Raymond C."/>
            <person name="Rouse G."/>
            <person name="Saenphimmachak C."/>
            <person name="Wu Z."/>
            <person name="Romero P."/>
            <person name="Gordon D."/>
            <person name="Zhang S."/>
            <person name="Yoo H."/>
            <person name="Tao Y."/>
            <person name="Biddle P."/>
            <person name="Jung M."/>
            <person name="Krespan W."/>
            <person name="Perry M."/>
            <person name="Gordon-Kamm B."/>
            <person name="Liao L."/>
            <person name="Kim S."/>
            <person name="Hendrick C."/>
            <person name="Zhao Z.-Y."/>
            <person name="Dolan M."/>
            <person name="Chumley F."/>
            <person name="Tingey S.V."/>
            <person name="Tomb J.-F."/>
            <person name="Gordon M.P."/>
            <person name="Olson M.V."/>
            <person name="Nester E.W."/>
        </authorList>
    </citation>
    <scope>NUCLEOTIDE SEQUENCE [LARGE SCALE GENOMIC DNA]</scope>
    <source>
        <strain>C58 / ATCC 33970</strain>
    </source>
</reference>
<reference key="2">
    <citation type="journal article" date="2001" name="Science">
        <title>Genome sequence of the plant pathogen and biotechnology agent Agrobacterium tumefaciens C58.</title>
        <authorList>
            <person name="Goodner B."/>
            <person name="Hinkle G."/>
            <person name="Gattung S."/>
            <person name="Miller N."/>
            <person name="Blanchard M."/>
            <person name="Qurollo B."/>
            <person name="Goldman B.S."/>
            <person name="Cao Y."/>
            <person name="Askenazi M."/>
            <person name="Halling C."/>
            <person name="Mullin L."/>
            <person name="Houmiel K."/>
            <person name="Gordon J."/>
            <person name="Vaudin M."/>
            <person name="Iartchouk O."/>
            <person name="Epp A."/>
            <person name="Liu F."/>
            <person name="Wollam C."/>
            <person name="Allinger M."/>
            <person name="Doughty D."/>
            <person name="Scott C."/>
            <person name="Lappas C."/>
            <person name="Markelz B."/>
            <person name="Flanagan C."/>
            <person name="Crowell C."/>
            <person name="Gurson J."/>
            <person name="Lomo C."/>
            <person name="Sear C."/>
            <person name="Strub G."/>
            <person name="Cielo C."/>
            <person name="Slater S."/>
        </authorList>
    </citation>
    <scope>NUCLEOTIDE SEQUENCE [LARGE SCALE GENOMIC DNA]</scope>
    <source>
        <strain>C58 / ATCC 33970</strain>
    </source>
</reference>
<comment type="function">
    <text evidence="1">Catalyzes the isomerization of 5-dehydro-4-deoxy-D-glucuronate to 3-deoxy-D-glycero-2,5-hexodiulosonate.</text>
</comment>
<comment type="catalytic activity">
    <reaction evidence="1">
        <text>5-dehydro-4-deoxy-D-glucuronate = 3-deoxy-D-glycero-2,5-hexodiulosonate</text>
        <dbReference type="Rhea" id="RHEA:23896"/>
        <dbReference type="ChEBI" id="CHEBI:17117"/>
        <dbReference type="ChEBI" id="CHEBI:29071"/>
        <dbReference type="EC" id="5.3.1.17"/>
    </reaction>
</comment>
<comment type="cofactor">
    <cofactor evidence="1">
        <name>Zn(2+)</name>
        <dbReference type="ChEBI" id="CHEBI:29105"/>
    </cofactor>
    <text evidence="1">Binds 1 zinc ion per subunit.</text>
</comment>
<comment type="pathway">
    <text evidence="1">Glycan metabolism; pectin degradation; 2-dehydro-3-deoxy-D-gluconate from pectin: step 4/5.</text>
</comment>
<comment type="similarity">
    <text evidence="1">Belongs to the KduI family.</text>
</comment>
<gene>
    <name evidence="1" type="primary">kduI</name>
    <name type="ordered locus">Atu3142</name>
    <name type="ORF">AGR_L_3335</name>
</gene>